<dbReference type="EC" id="2.1.1.228" evidence="1"/>
<dbReference type="EMBL" id="CT978603">
    <property type="protein sequence ID" value="CAK28630.1"/>
    <property type="molecule type" value="Genomic_DNA"/>
</dbReference>
<dbReference type="SMR" id="A5GUS1"/>
<dbReference type="STRING" id="316278.SynRCC307_1727"/>
<dbReference type="KEGG" id="syr:SynRCC307_1727"/>
<dbReference type="eggNOG" id="COG0336">
    <property type="taxonomic scope" value="Bacteria"/>
</dbReference>
<dbReference type="HOGENOM" id="CLU_047363_0_1_3"/>
<dbReference type="OrthoDB" id="9807416at2"/>
<dbReference type="Proteomes" id="UP000001115">
    <property type="component" value="Chromosome"/>
</dbReference>
<dbReference type="GO" id="GO:0005829">
    <property type="term" value="C:cytosol"/>
    <property type="evidence" value="ECO:0007669"/>
    <property type="project" value="TreeGrafter"/>
</dbReference>
<dbReference type="GO" id="GO:0052906">
    <property type="term" value="F:tRNA (guanine(37)-N1)-methyltransferase activity"/>
    <property type="evidence" value="ECO:0007669"/>
    <property type="project" value="UniProtKB-UniRule"/>
</dbReference>
<dbReference type="GO" id="GO:0002939">
    <property type="term" value="P:tRNA N1-guanine methylation"/>
    <property type="evidence" value="ECO:0007669"/>
    <property type="project" value="TreeGrafter"/>
</dbReference>
<dbReference type="CDD" id="cd18080">
    <property type="entry name" value="TrmD-like"/>
    <property type="match status" value="1"/>
</dbReference>
<dbReference type="Gene3D" id="3.40.1280.10">
    <property type="match status" value="1"/>
</dbReference>
<dbReference type="Gene3D" id="1.10.1270.20">
    <property type="entry name" value="tRNA(m1g37)methyltransferase, domain 2"/>
    <property type="match status" value="1"/>
</dbReference>
<dbReference type="HAMAP" id="MF_00605">
    <property type="entry name" value="TrmD"/>
    <property type="match status" value="1"/>
</dbReference>
<dbReference type="InterPro" id="IPR029028">
    <property type="entry name" value="Alpha/beta_knot_MTases"/>
</dbReference>
<dbReference type="InterPro" id="IPR023148">
    <property type="entry name" value="tRNA_m1G_MeTrfase_C_sf"/>
</dbReference>
<dbReference type="InterPro" id="IPR002649">
    <property type="entry name" value="tRNA_m1G_MeTrfase_TrmD"/>
</dbReference>
<dbReference type="InterPro" id="IPR029026">
    <property type="entry name" value="tRNA_m1G_MTases_N"/>
</dbReference>
<dbReference type="InterPro" id="IPR016009">
    <property type="entry name" value="tRNA_MeTrfase_TRMD/TRM10"/>
</dbReference>
<dbReference type="NCBIfam" id="NF000648">
    <property type="entry name" value="PRK00026.1"/>
    <property type="match status" value="1"/>
</dbReference>
<dbReference type="NCBIfam" id="TIGR00088">
    <property type="entry name" value="trmD"/>
    <property type="match status" value="1"/>
</dbReference>
<dbReference type="PANTHER" id="PTHR46417">
    <property type="entry name" value="TRNA (GUANINE-N(1)-)-METHYLTRANSFERASE"/>
    <property type="match status" value="1"/>
</dbReference>
<dbReference type="PANTHER" id="PTHR46417:SF1">
    <property type="entry name" value="TRNA (GUANINE-N(1)-)-METHYLTRANSFERASE"/>
    <property type="match status" value="1"/>
</dbReference>
<dbReference type="Pfam" id="PF01746">
    <property type="entry name" value="tRNA_m1G_MT"/>
    <property type="match status" value="1"/>
</dbReference>
<dbReference type="PIRSF" id="PIRSF000386">
    <property type="entry name" value="tRNA_mtase"/>
    <property type="match status" value="1"/>
</dbReference>
<dbReference type="SUPFAM" id="SSF75217">
    <property type="entry name" value="alpha/beta knot"/>
    <property type="match status" value="1"/>
</dbReference>
<comment type="function">
    <text evidence="1">Specifically methylates guanosine-37 in various tRNAs.</text>
</comment>
<comment type="catalytic activity">
    <reaction evidence="1">
        <text>guanosine(37) in tRNA + S-adenosyl-L-methionine = N(1)-methylguanosine(37) in tRNA + S-adenosyl-L-homocysteine + H(+)</text>
        <dbReference type="Rhea" id="RHEA:36899"/>
        <dbReference type="Rhea" id="RHEA-COMP:10145"/>
        <dbReference type="Rhea" id="RHEA-COMP:10147"/>
        <dbReference type="ChEBI" id="CHEBI:15378"/>
        <dbReference type="ChEBI" id="CHEBI:57856"/>
        <dbReference type="ChEBI" id="CHEBI:59789"/>
        <dbReference type="ChEBI" id="CHEBI:73542"/>
        <dbReference type="ChEBI" id="CHEBI:74269"/>
        <dbReference type="EC" id="2.1.1.228"/>
    </reaction>
</comment>
<comment type="subunit">
    <text evidence="1">Homodimer.</text>
</comment>
<comment type="subcellular location">
    <subcellularLocation>
        <location evidence="1">Cytoplasm</location>
    </subcellularLocation>
</comment>
<comment type="similarity">
    <text evidence="1">Belongs to the RNA methyltransferase TrmD family.</text>
</comment>
<reference key="1">
    <citation type="submission" date="2006-05" db="EMBL/GenBank/DDBJ databases">
        <authorList>
            <consortium name="Genoscope"/>
        </authorList>
    </citation>
    <scope>NUCLEOTIDE SEQUENCE [LARGE SCALE GENOMIC DNA]</scope>
    <source>
        <strain>RCC307</strain>
    </source>
</reference>
<feature type="chain" id="PRO_1000006534" description="tRNA (guanine-N(1)-)-methyltransferase">
    <location>
        <begin position="1"/>
        <end position="237"/>
    </location>
</feature>
<feature type="binding site" evidence="1">
    <location>
        <position position="115"/>
    </location>
    <ligand>
        <name>S-adenosyl-L-methionine</name>
        <dbReference type="ChEBI" id="CHEBI:59789"/>
    </ligand>
</feature>
<feature type="binding site" evidence="1">
    <location>
        <begin position="134"/>
        <end position="139"/>
    </location>
    <ligand>
        <name>S-adenosyl-L-methionine</name>
        <dbReference type="ChEBI" id="CHEBI:59789"/>
    </ligand>
</feature>
<evidence type="ECO:0000255" key="1">
    <source>
        <dbReference type="HAMAP-Rule" id="MF_00605"/>
    </source>
</evidence>
<protein>
    <recommendedName>
        <fullName evidence="1">tRNA (guanine-N(1)-)-methyltransferase</fullName>
        <ecNumber evidence="1">2.1.1.228</ecNumber>
    </recommendedName>
    <alternativeName>
        <fullName evidence="1">M1G-methyltransferase</fullName>
    </alternativeName>
    <alternativeName>
        <fullName evidence="1">tRNA [GM37] methyltransferase</fullName>
    </alternativeName>
</protein>
<accession>A5GUS1</accession>
<sequence length="237" mass="26430">MSSFRLDVVSLVPEVFDSLRGLGVIGRAFHAGIAELHTHNPRDYATDRYRKVDDEPYGGGAGMVLKPEPVFAAFEAIPVQPSRRVLLMTPQGKPLQQADLRRWATDYEQLVLLCGHYEGFDERIRSLADEEVSLGDFVLTGGELPAMTIINGTVRLRPGTVGTADSLVEESHSAGLLEHPHYTRPATFREMDVPAVLRSGDHGAIARWRAEQQKERTQLRRPDLWAQWQAEHPGNEG</sequence>
<proteinExistence type="inferred from homology"/>
<keyword id="KW-0963">Cytoplasm</keyword>
<keyword id="KW-0489">Methyltransferase</keyword>
<keyword id="KW-1185">Reference proteome</keyword>
<keyword id="KW-0949">S-adenosyl-L-methionine</keyword>
<keyword id="KW-0808">Transferase</keyword>
<keyword id="KW-0819">tRNA processing</keyword>
<gene>
    <name evidence="1" type="primary">trmD</name>
    <name type="ordered locus">SynRCC307_1727</name>
</gene>
<name>TRMD_SYNR3</name>
<organism>
    <name type="scientific">Synechococcus sp. (strain RCC307)</name>
    <dbReference type="NCBI Taxonomy" id="316278"/>
    <lineage>
        <taxon>Bacteria</taxon>
        <taxon>Bacillati</taxon>
        <taxon>Cyanobacteriota</taxon>
        <taxon>Cyanophyceae</taxon>
        <taxon>Synechococcales</taxon>
        <taxon>Synechococcaceae</taxon>
        <taxon>Synechococcus</taxon>
    </lineage>
</organism>